<accession>B9KU94</accession>
<reference key="1">
    <citation type="journal article" date="2009" name="J. Bacteriol.">
        <title>Complete genome sequence of Rhodobacter sphaeroides KD131.</title>
        <authorList>
            <person name="Lim S.-K."/>
            <person name="Kim S.J."/>
            <person name="Cha S.H."/>
            <person name="Oh Y.-K."/>
            <person name="Rhee H.-J."/>
            <person name="Kim M.-S."/>
            <person name="Lee J.K."/>
        </authorList>
    </citation>
    <scope>NUCLEOTIDE SEQUENCE [LARGE SCALE GENOMIC DNA]</scope>
    <source>
        <strain>KD131 / KCTC 12085</strain>
    </source>
</reference>
<organism>
    <name type="scientific">Cereibacter sphaeroides (strain KD131 / KCTC 12085)</name>
    <name type="common">Rhodobacter sphaeroides</name>
    <dbReference type="NCBI Taxonomy" id="557760"/>
    <lineage>
        <taxon>Bacteria</taxon>
        <taxon>Pseudomonadati</taxon>
        <taxon>Pseudomonadota</taxon>
        <taxon>Alphaproteobacteria</taxon>
        <taxon>Rhodobacterales</taxon>
        <taxon>Paracoccaceae</taxon>
        <taxon>Cereibacter</taxon>
    </lineage>
</organism>
<name>KCY_CERSK</name>
<dbReference type="EC" id="2.7.4.25" evidence="1"/>
<dbReference type="EMBL" id="CP001151">
    <property type="protein sequence ID" value="ACM03622.1"/>
    <property type="molecule type" value="Genomic_DNA"/>
</dbReference>
<dbReference type="RefSeq" id="WP_012641264.1">
    <property type="nucleotide sequence ID" value="NC_011958.1"/>
</dbReference>
<dbReference type="SMR" id="B9KU94"/>
<dbReference type="GeneID" id="67449069"/>
<dbReference type="KEGG" id="rsk:RSKD131_3762"/>
<dbReference type="HOGENOM" id="CLU_079959_0_1_5"/>
<dbReference type="GO" id="GO:0005737">
    <property type="term" value="C:cytoplasm"/>
    <property type="evidence" value="ECO:0007669"/>
    <property type="project" value="UniProtKB-SubCell"/>
</dbReference>
<dbReference type="GO" id="GO:0005524">
    <property type="term" value="F:ATP binding"/>
    <property type="evidence" value="ECO:0007669"/>
    <property type="project" value="UniProtKB-UniRule"/>
</dbReference>
<dbReference type="GO" id="GO:0036430">
    <property type="term" value="F:CMP kinase activity"/>
    <property type="evidence" value="ECO:0007669"/>
    <property type="project" value="RHEA"/>
</dbReference>
<dbReference type="GO" id="GO:0036431">
    <property type="term" value="F:dCMP kinase activity"/>
    <property type="evidence" value="ECO:0007669"/>
    <property type="project" value="RHEA"/>
</dbReference>
<dbReference type="GO" id="GO:0006220">
    <property type="term" value="P:pyrimidine nucleotide metabolic process"/>
    <property type="evidence" value="ECO:0007669"/>
    <property type="project" value="UniProtKB-UniRule"/>
</dbReference>
<dbReference type="CDD" id="cd02020">
    <property type="entry name" value="CMPK"/>
    <property type="match status" value="1"/>
</dbReference>
<dbReference type="Gene3D" id="3.40.50.300">
    <property type="entry name" value="P-loop containing nucleotide triphosphate hydrolases"/>
    <property type="match status" value="1"/>
</dbReference>
<dbReference type="HAMAP" id="MF_00238">
    <property type="entry name" value="Cytidyl_kinase_type1"/>
    <property type="match status" value="1"/>
</dbReference>
<dbReference type="InterPro" id="IPR003136">
    <property type="entry name" value="Cytidylate_kin"/>
</dbReference>
<dbReference type="InterPro" id="IPR011994">
    <property type="entry name" value="Cytidylate_kinase_dom"/>
</dbReference>
<dbReference type="InterPro" id="IPR027417">
    <property type="entry name" value="P-loop_NTPase"/>
</dbReference>
<dbReference type="Pfam" id="PF02224">
    <property type="entry name" value="Cytidylate_kin"/>
    <property type="match status" value="2"/>
</dbReference>
<dbReference type="SUPFAM" id="SSF52540">
    <property type="entry name" value="P-loop containing nucleoside triphosphate hydrolases"/>
    <property type="match status" value="1"/>
</dbReference>
<sequence>MRFTVAIDGPAAAGKGTISRAVATHFRFAHLDTGLLYRAVGAKVTEGADPVAAAEGLDLADLARDDLRSAEAGQAASRVAALPEVRAALVAFQRSFARREGGAVLDGRDIGTVICPEAEVKLFVTASDEERARRRWLELAAKGGTQSEAEILADLRERDRRDREREAAPLRPAPDALLLDTTELTIDAAVNKAIEAIELRQAQGRE</sequence>
<feature type="chain" id="PRO_1000125296" description="Cytidylate kinase">
    <location>
        <begin position="1"/>
        <end position="206"/>
    </location>
</feature>
<feature type="region of interest" description="Disordered" evidence="2">
    <location>
        <begin position="155"/>
        <end position="174"/>
    </location>
</feature>
<feature type="compositionally biased region" description="Basic and acidic residues" evidence="2">
    <location>
        <begin position="155"/>
        <end position="168"/>
    </location>
</feature>
<feature type="binding site" evidence="1">
    <location>
        <begin position="9"/>
        <end position="17"/>
    </location>
    <ligand>
        <name>ATP</name>
        <dbReference type="ChEBI" id="CHEBI:30616"/>
    </ligand>
</feature>
<proteinExistence type="inferred from homology"/>
<evidence type="ECO:0000255" key="1">
    <source>
        <dbReference type="HAMAP-Rule" id="MF_00238"/>
    </source>
</evidence>
<evidence type="ECO:0000256" key="2">
    <source>
        <dbReference type="SAM" id="MobiDB-lite"/>
    </source>
</evidence>
<keyword id="KW-0067">ATP-binding</keyword>
<keyword id="KW-0963">Cytoplasm</keyword>
<keyword id="KW-0418">Kinase</keyword>
<keyword id="KW-0547">Nucleotide-binding</keyword>
<keyword id="KW-0808">Transferase</keyword>
<gene>
    <name evidence="1" type="primary">cmk</name>
    <name type="ordered locus">RSKD131_3762</name>
</gene>
<protein>
    <recommendedName>
        <fullName evidence="1">Cytidylate kinase</fullName>
        <shortName evidence="1">CK</shortName>
        <ecNumber evidence="1">2.7.4.25</ecNumber>
    </recommendedName>
    <alternativeName>
        <fullName evidence="1">Cytidine monophosphate kinase</fullName>
        <shortName evidence="1">CMP kinase</shortName>
    </alternativeName>
</protein>
<comment type="catalytic activity">
    <reaction evidence="1">
        <text>CMP + ATP = CDP + ADP</text>
        <dbReference type="Rhea" id="RHEA:11600"/>
        <dbReference type="ChEBI" id="CHEBI:30616"/>
        <dbReference type="ChEBI" id="CHEBI:58069"/>
        <dbReference type="ChEBI" id="CHEBI:60377"/>
        <dbReference type="ChEBI" id="CHEBI:456216"/>
        <dbReference type="EC" id="2.7.4.25"/>
    </reaction>
</comment>
<comment type="catalytic activity">
    <reaction evidence="1">
        <text>dCMP + ATP = dCDP + ADP</text>
        <dbReference type="Rhea" id="RHEA:25094"/>
        <dbReference type="ChEBI" id="CHEBI:30616"/>
        <dbReference type="ChEBI" id="CHEBI:57566"/>
        <dbReference type="ChEBI" id="CHEBI:58593"/>
        <dbReference type="ChEBI" id="CHEBI:456216"/>
        <dbReference type="EC" id="2.7.4.25"/>
    </reaction>
</comment>
<comment type="subcellular location">
    <subcellularLocation>
        <location evidence="1">Cytoplasm</location>
    </subcellularLocation>
</comment>
<comment type="similarity">
    <text evidence="1">Belongs to the cytidylate kinase family. Type 1 subfamily.</text>
</comment>